<reference key="1">
    <citation type="journal article" date="1991" name="J. Biol. Chem.">
        <title>Halobacterial S9 operon. Three ribosomal protein genes are cotranscribed with genes encoding a tRNA(Leu), the enolase, and a putative membrane protein in the archaebacterium Haloarcula (Halobacterium) marismortui.</title>
        <authorList>
            <person name="Kroemer W.J."/>
            <person name="Arndt E."/>
        </authorList>
    </citation>
    <scope>NUCLEOTIDE SEQUENCE [GENOMIC DNA]</scope>
</reference>
<reference key="2">
    <citation type="journal article" date="2004" name="Genome Res.">
        <title>Genome sequence of Haloarcula marismortui: a halophilic archaeon from the Dead Sea.</title>
        <authorList>
            <person name="Baliga N.S."/>
            <person name="Bonneau R."/>
            <person name="Facciotti M.T."/>
            <person name="Pan M."/>
            <person name="Glusman G."/>
            <person name="Deutsch E.W."/>
            <person name="Shannon P."/>
            <person name="Chiu Y."/>
            <person name="Weng R.S."/>
            <person name="Gan R.R."/>
            <person name="Hung P."/>
            <person name="Date S.V."/>
            <person name="Marcotte E."/>
            <person name="Hood L."/>
            <person name="Ng W.V."/>
        </authorList>
    </citation>
    <scope>NUCLEOTIDE SEQUENCE [LARGE SCALE GENOMIC DNA]</scope>
    <source>
        <strain>ATCC 43049 / DSM 3752 / JCM 8966 / VKM B-1809</strain>
    </source>
</reference>
<reference key="3">
    <citation type="journal article" date="2000" name="Science">
        <title>The complete atomic structure of the large ribosomal subunit at 2.4 A resolution.</title>
        <authorList>
            <person name="Ban N."/>
            <person name="Nissen P."/>
            <person name="Hansen J."/>
            <person name="Moore P.B."/>
            <person name="Steitz T.A."/>
        </authorList>
    </citation>
    <scope>X-RAY CRYSTALLOGRAPHY (2.4 ANGSTROMS) OF THE 50S SUBUNIT</scope>
    <source>
        <strain>ATCC 43049 / DSM 3752 / JCM 8966 / VKM B-1809</strain>
    </source>
</reference>
<reference key="4">
    <citation type="journal article" date="2000" name="Science">
        <title>The structural basis of ribosome activity in peptide bond synthesis.</title>
        <authorList>
            <person name="Nissen P."/>
            <person name="Hansen J."/>
            <person name="Ban N."/>
            <person name="Moore P.B."/>
            <person name="Steitz T.A."/>
        </authorList>
    </citation>
    <scope>X-RAY CRYSTALLOGRAPHY (3.0 ANGSTROMS) OF THE 50S SUBUNIT</scope>
    <source>
        <strain>ATCC 43049 / DSM 3752 / JCM 8966 / VKM B-1809</strain>
    </source>
</reference>
<reference key="5">
    <citation type="journal article" date="2002" name="Nat. Struct. Biol.">
        <title>A pre-translocational intermediate in protein synthesis observed in crystals of enzymatically active 50S subunits.</title>
        <authorList>
            <person name="Schmeing T.M."/>
            <person name="Seila A.C."/>
            <person name="Hansen J.L."/>
            <person name="Freeborn B."/>
            <person name="Soukup J.K."/>
            <person name="Scaringe S.A."/>
            <person name="Strobel S.A."/>
            <person name="Moore P.B."/>
            <person name="Steitz T.A."/>
        </authorList>
    </citation>
    <scope>X-RAY CRYSTALLOGRAPHY (3.1 ANGSTROMS) OF THE 50S SUBUNIT</scope>
    <source>
        <strain>ATCC 43049 / DSM 3752 / JCM 8966 / VKM B-1809</strain>
    </source>
</reference>
<reference key="6">
    <citation type="journal article" date="2001" name="EMBO J.">
        <title>The kink-turn: a new RNA secondary structure motif.</title>
        <authorList>
            <person name="Klein D.J."/>
            <person name="Schmeing T.M."/>
            <person name="Moore P.B."/>
            <person name="Steitz T.A."/>
        </authorList>
    </citation>
    <scope>X-RAY CRYSTALLOGRAPHY (2.4 ANGSTROMS) OF THE 50S SUBUNIT</scope>
    <source>
        <strain>ATCC 43049 / DSM 3752 / JCM 8966 / VKM B-1809</strain>
    </source>
</reference>
<reference key="7">
    <citation type="journal article" date="2002" name="Mol. Cell">
        <title>The structures of four macrolide antibiotics bound to the large ribosomal subunit.</title>
        <authorList>
            <person name="Hansen J.L."/>
            <person name="Ippolito J.A."/>
            <person name="Ban N."/>
            <person name="Nissen P."/>
            <person name="Moore P.B."/>
            <person name="Steitz T.A."/>
        </authorList>
    </citation>
    <scope>X-RAY CRYSTALLOGRAPHY (3.0 ANGSTROMS) OF THE 50S SUBUNIT IN COMPLEX WITH FOUR MACROLIDE ANTIBIOTICS</scope>
    <source>
        <strain>ATCC 43049 / DSM 3752 / JCM 8966 / VKM B-1809</strain>
    </source>
</reference>
<reference key="8">
    <citation type="journal article" date="2002" name="Proc. Natl. Acad. Sci. U.S.A.">
        <title>Structural insights into peptide bond formation.</title>
        <authorList>
            <person name="Hansen J.L."/>
            <person name="Schmeing T.M."/>
            <person name="Moore P.B."/>
            <person name="Steitz T.A."/>
        </authorList>
    </citation>
    <scope>X-RAY CRYSTALLOGRAPHY (2.8 ANGSTROMS) OF THE 50S SUBUNIT</scope>
    <source>
        <strain>ATCC 43049 / DSM 3752 / JCM 8966 / VKM B-1809</strain>
    </source>
</reference>
<reference key="9">
    <citation type="journal article" date="2003" name="J. Mol. Biol.">
        <title>Structures of five antibiotics bound at the peptidyl transferase center of the large ribosomal subunit.</title>
        <authorList>
            <person name="Hansen J.L."/>
            <person name="Moore P.B."/>
            <person name="Steitz T.A."/>
        </authorList>
    </citation>
    <scope>X-RAY CRYSTALLOGRAPHY (3.0 ANGSTROMS) OF THE 50S SUBUNIT IN COMPLEX WITH FIVE ANTIBIOTICS AT THE PEPTIDYL TRANSFERASE CENTER</scope>
    <source>
        <strain>ATCC 43049 / DSM 3752 / JCM 8966 / VKM B-1809</strain>
    </source>
</reference>
<reference key="10">
    <citation type="journal article" date="2003" name="RNA">
        <title>Structures of deacylated tRNA mimics bound to the E site of the large ribosomal subunit.</title>
        <authorList>
            <person name="Schmeing T.M."/>
            <person name="Moore P.B."/>
            <person name="Steitz T.A."/>
        </authorList>
    </citation>
    <scope>X-RAY CRYSTALLOGRAPHY (2.9 ANGSTROMS) OF THE 50S SUBUNIT WITH TWO DIFFERENT E SITE SUBSTRATES</scope>
</reference>
<reference key="11">
    <citation type="journal article" date="2013" name="Acta Crystallogr. D">
        <title>Revisiting the Haloarcula marismortui 50S ribosomal subunit model.</title>
        <authorList>
            <person name="Gabdulkhakov A."/>
            <person name="Nikonov S."/>
            <person name="Garber M."/>
        </authorList>
    </citation>
    <scope>X-RAY CRYSTALLOGRAPHY (2.4 ANGSTROMS) OF THE 50S SUBUNIT</scope>
</reference>
<name>RL13_HALMA</name>
<dbReference type="EMBL" id="M76567">
    <property type="protein sequence ID" value="AAA73097.1"/>
    <property type="molecule type" value="Genomic_DNA"/>
</dbReference>
<dbReference type="EMBL" id="AY596297">
    <property type="protein sequence ID" value="AAV45145.1"/>
    <property type="molecule type" value="Genomic_DNA"/>
</dbReference>
<dbReference type="PIR" id="B41715">
    <property type="entry name" value="B41715"/>
</dbReference>
<dbReference type="RefSeq" id="WP_004593558.1">
    <property type="nucleotide sequence ID" value="NZ_CP039138.1"/>
</dbReference>
<dbReference type="PDB" id="1FFK">
    <property type="method" value="X-ray"/>
    <property type="resolution" value="2.40 A"/>
    <property type="chains" value="G=1-145"/>
</dbReference>
<dbReference type="PDB" id="1JJ2">
    <property type="method" value="X-ray"/>
    <property type="resolution" value="2.40 A"/>
    <property type="chains" value="I=1-145"/>
</dbReference>
<dbReference type="PDB" id="1K73">
    <property type="method" value="X-ray"/>
    <property type="resolution" value="3.01 A"/>
    <property type="chains" value="K=1-145"/>
</dbReference>
<dbReference type="PDB" id="1K8A">
    <property type="method" value="X-ray"/>
    <property type="resolution" value="3.00 A"/>
    <property type="chains" value="K=1-145"/>
</dbReference>
<dbReference type="PDB" id="1K9M">
    <property type="method" value="X-ray"/>
    <property type="resolution" value="3.00 A"/>
    <property type="chains" value="K=1-145"/>
</dbReference>
<dbReference type="PDB" id="1KC8">
    <property type="method" value="X-ray"/>
    <property type="resolution" value="3.01 A"/>
    <property type="chains" value="K=1-145"/>
</dbReference>
<dbReference type="PDB" id="1KD1">
    <property type="method" value="X-ray"/>
    <property type="resolution" value="3.00 A"/>
    <property type="chains" value="K=1-145"/>
</dbReference>
<dbReference type="PDB" id="1KQS">
    <property type="method" value="X-ray"/>
    <property type="resolution" value="3.10 A"/>
    <property type="chains" value="I=1-145"/>
</dbReference>
<dbReference type="PDB" id="1M1K">
    <property type="method" value="X-ray"/>
    <property type="resolution" value="3.20 A"/>
    <property type="chains" value="K=1-145"/>
</dbReference>
<dbReference type="PDB" id="1M90">
    <property type="method" value="X-ray"/>
    <property type="resolution" value="2.80 A"/>
    <property type="chains" value="K=1-145"/>
</dbReference>
<dbReference type="PDB" id="1ML5">
    <property type="method" value="EM"/>
    <property type="resolution" value="14.00 A"/>
    <property type="chains" value="m=1-145"/>
</dbReference>
<dbReference type="PDB" id="1N8R">
    <property type="method" value="X-ray"/>
    <property type="resolution" value="3.00 A"/>
    <property type="chains" value="K=1-145"/>
</dbReference>
<dbReference type="PDB" id="1NJI">
    <property type="method" value="X-ray"/>
    <property type="resolution" value="3.00 A"/>
    <property type="chains" value="K=1-145"/>
</dbReference>
<dbReference type="PDB" id="1Q7Y">
    <property type="method" value="X-ray"/>
    <property type="resolution" value="3.20 A"/>
    <property type="chains" value="K=1-145"/>
</dbReference>
<dbReference type="PDB" id="1Q81">
    <property type="method" value="X-ray"/>
    <property type="resolution" value="2.95 A"/>
    <property type="chains" value="K=1-145"/>
</dbReference>
<dbReference type="PDB" id="1Q82">
    <property type="method" value="X-ray"/>
    <property type="resolution" value="2.98 A"/>
    <property type="chains" value="K=1-145"/>
</dbReference>
<dbReference type="PDB" id="1Q86">
    <property type="method" value="X-ray"/>
    <property type="resolution" value="3.00 A"/>
    <property type="chains" value="K=1-145"/>
</dbReference>
<dbReference type="PDB" id="1QVF">
    <property type="method" value="X-ray"/>
    <property type="resolution" value="3.10 A"/>
    <property type="chains" value="I=1-145"/>
</dbReference>
<dbReference type="PDB" id="1QVG">
    <property type="method" value="X-ray"/>
    <property type="resolution" value="2.90 A"/>
    <property type="chains" value="I=1-145"/>
</dbReference>
<dbReference type="PDB" id="1S72">
    <property type="method" value="X-ray"/>
    <property type="resolution" value="2.40 A"/>
    <property type="chains" value="J=1-145"/>
</dbReference>
<dbReference type="PDB" id="1VQ4">
    <property type="method" value="X-ray"/>
    <property type="resolution" value="2.70 A"/>
    <property type="chains" value="J=1-145"/>
</dbReference>
<dbReference type="PDB" id="1VQ5">
    <property type="method" value="X-ray"/>
    <property type="resolution" value="2.60 A"/>
    <property type="chains" value="J=1-145"/>
</dbReference>
<dbReference type="PDB" id="1VQ6">
    <property type="method" value="X-ray"/>
    <property type="resolution" value="2.70 A"/>
    <property type="chains" value="J=1-145"/>
</dbReference>
<dbReference type="PDB" id="1VQ7">
    <property type="method" value="X-ray"/>
    <property type="resolution" value="2.50 A"/>
    <property type="chains" value="J=1-145"/>
</dbReference>
<dbReference type="PDB" id="1VQ8">
    <property type="method" value="X-ray"/>
    <property type="resolution" value="2.20 A"/>
    <property type="chains" value="J=1-145"/>
</dbReference>
<dbReference type="PDB" id="1VQ9">
    <property type="method" value="X-ray"/>
    <property type="resolution" value="2.40 A"/>
    <property type="chains" value="J=1-145"/>
</dbReference>
<dbReference type="PDB" id="1VQK">
    <property type="method" value="X-ray"/>
    <property type="resolution" value="2.30 A"/>
    <property type="chains" value="J=1-145"/>
</dbReference>
<dbReference type="PDB" id="1VQL">
    <property type="method" value="X-ray"/>
    <property type="resolution" value="2.30 A"/>
    <property type="chains" value="J=1-145"/>
</dbReference>
<dbReference type="PDB" id="1VQM">
    <property type="method" value="X-ray"/>
    <property type="resolution" value="2.30 A"/>
    <property type="chains" value="J=1-145"/>
</dbReference>
<dbReference type="PDB" id="1VQN">
    <property type="method" value="X-ray"/>
    <property type="resolution" value="2.40 A"/>
    <property type="chains" value="J=1-145"/>
</dbReference>
<dbReference type="PDB" id="1VQO">
    <property type="method" value="X-ray"/>
    <property type="resolution" value="2.20 A"/>
    <property type="chains" value="J=1-145"/>
</dbReference>
<dbReference type="PDB" id="1VQP">
    <property type="method" value="X-ray"/>
    <property type="resolution" value="2.25 A"/>
    <property type="chains" value="J=1-145"/>
</dbReference>
<dbReference type="PDB" id="1W2B">
    <property type="method" value="X-ray"/>
    <property type="resolution" value="3.50 A"/>
    <property type="chains" value="I=1-145"/>
</dbReference>
<dbReference type="PDB" id="1YHQ">
    <property type="method" value="X-ray"/>
    <property type="resolution" value="2.40 A"/>
    <property type="chains" value="J=1-145"/>
</dbReference>
<dbReference type="PDB" id="1YI2">
    <property type="method" value="X-ray"/>
    <property type="resolution" value="2.65 A"/>
    <property type="chains" value="J=1-145"/>
</dbReference>
<dbReference type="PDB" id="1YIJ">
    <property type="method" value="X-ray"/>
    <property type="resolution" value="2.60 A"/>
    <property type="chains" value="J=1-145"/>
</dbReference>
<dbReference type="PDB" id="1YIT">
    <property type="method" value="X-ray"/>
    <property type="resolution" value="2.80 A"/>
    <property type="chains" value="J=1-145"/>
</dbReference>
<dbReference type="PDB" id="1YJ9">
    <property type="method" value="X-ray"/>
    <property type="resolution" value="2.90 A"/>
    <property type="chains" value="J=1-145"/>
</dbReference>
<dbReference type="PDB" id="1YJN">
    <property type="method" value="X-ray"/>
    <property type="resolution" value="3.00 A"/>
    <property type="chains" value="J=1-145"/>
</dbReference>
<dbReference type="PDB" id="1YJW">
    <property type="method" value="X-ray"/>
    <property type="resolution" value="2.90 A"/>
    <property type="chains" value="J=1-145"/>
</dbReference>
<dbReference type="PDB" id="2OTJ">
    <property type="method" value="X-ray"/>
    <property type="resolution" value="2.90 A"/>
    <property type="chains" value="J=1-145"/>
</dbReference>
<dbReference type="PDB" id="2OTL">
    <property type="method" value="X-ray"/>
    <property type="resolution" value="2.70 A"/>
    <property type="chains" value="J=1-145"/>
</dbReference>
<dbReference type="PDB" id="2QA4">
    <property type="method" value="X-ray"/>
    <property type="resolution" value="3.00 A"/>
    <property type="chains" value="J=1-145"/>
</dbReference>
<dbReference type="PDB" id="2QEX">
    <property type="method" value="X-ray"/>
    <property type="resolution" value="2.90 A"/>
    <property type="chains" value="J=1-145"/>
</dbReference>
<dbReference type="PDB" id="3CC2">
    <property type="method" value="X-ray"/>
    <property type="resolution" value="2.40 A"/>
    <property type="chains" value="J=1-145"/>
</dbReference>
<dbReference type="PDB" id="3CC4">
    <property type="method" value="X-ray"/>
    <property type="resolution" value="2.70 A"/>
    <property type="chains" value="J=1-145"/>
</dbReference>
<dbReference type="PDB" id="3CC7">
    <property type="method" value="X-ray"/>
    <property type="resolution" value="2.70 A"/>
    <property type="chains" value="J=1-145"/>
</dbReference>
<dbReference type="PDB" id="3CCE">
    <property type="method" value="X-ray"/>
    <property type="resolution" value="2.75 A"/>
    <property type="chains" value="J=1-145"/>
</dbReference>
<dbReference type="PDB" id="3CCJ">
    <property type="method" value="X-ray"/>
    <property type="resolution" value="2.70 A"/>
    <property type="chains" value="J=1-145"/>
</dbReference>
<dbReference type="PDB" id="3CCL">
    <property type="method" value="X-ray"/>
    <property type="resolution" value="2.90 A"/>
    <property type="chains" value="J=1-145"/>
</dbReference>
<dbReference type="PDB" id="3CCM">
    <property type="method" value="X-ray"/>
    <property type="resolution" value="2.55 A"/>
    <property type="chains" value="J=1-145"/>
</dbReference>
<dbReference type="PDB" id="3CCQ">
    <property type="method" value="X-ray"/>
    <property type="resolution" value="2.90 A"/>
    <property type="chains" value="J=1-145"/>
</dbReference>
<dbReference type="PDB" id="3CCR">
    <property type="method" value="X-ray"/>
    <property type="resolution" value="3.00 A"/>
    <property type="chains" value="J=1-145"/>
</dbReference>
<dbReference type="PDB" id="3CCS">
    <property type="method" value="X-ray"/>
    <property type="resolution" value="2.95 A"/>
    <property type="chains" value="J=1-145"/>
</dbReference>
<dbReference type="PDB" id="3CCU">
    <property type="method" value="X-ray"/>
    <property type="resolution" value="2.80 A"/>
    <property type="chains" value="J=1-145"/>
</dbReference>
<dbReference type="PDB" id="3CCV">
    <property type="method" value="X-ray"/>
    <property type="resolution" value="2.90 A"/>
    <property type="chains" value="J=1-145"/>
</dbReference>
<dbReference type="PDB" id="3CD6">
    <property type="method" value="X-ray"/>
    <property type="resolution" value="2.75 A"/>
    <property type="chains" value="J=1-145"/>
</dbReference>
<dbReference type="PDB" id="3CMA">
    <property type="method" value="X-ray"/>
    <property type="resolution" value="2.80 A"/>
    <property type="chains" value="J=1-145"/>
</dbReference>
<dbReference type="PDB" id="3CME">
    <property type="method" value="X-ray"/>
    <property type="resolution" value="2.95 A"/>
    <property type="chains" value="J=1-145"/>
</dbReference>
<dbReference type="PDB" id="3CPW">
    <property type="method" value="X-ray"/>
    <property type="resolution" value="2.70 A"/>
    <property type="chains" value="I=1-145"/>
</dbReference>
<dbReference type="PDB" id="3CXC">
    <property type="method" value="X-ray"/>
    <property type="resolution" value="3.00 A"/>
    <property type="chains" value="I=1-145"/>
</dbReference>
<dbReference type="PDB" id="3G4S">
    <property type="method" value="X-ray"/>
    <property type="resolution" value="3.20 A"/>
    <property type="chains" value="J=4-145"/>
</dbReference>
<dbReference type="PDB" id="3G6E">
    <property type="method" value="X-ray"/>
    <property type="resolution" value="2.70 A"/>
    <property type="chains" value="J=4-145"/>
</dbReference>
<dbReference type="PDB" id="3G71">
    <property type="method" value="X-ray"/>
    <property type="resolution" value="2.85 A"/>
    <property type="chains" value="J=4-145"/>
</dbReference>
<dbReference type="PDB" id="3I55">
    <property type="method" value="X-ray"/>
    <property type="resolution" value="3.11 A"/>
    <property type="chains" value="J=1-145"/>
</dbReference>
<dbReference type="PDB" id="3I56">
    <property type="method" value="X-ray"/>
    <property type="resolution" value="2.90 A"/>
    <property type="chains" value="J=1-145"/>
</dbReference>
<dbReference type="PDB" id="3OW2">
    <property type="method" value="X-ray"/>
    <property type="resolution" value="2.70 A"/>
    <property type="chains" value="I=4-145"/>
</dbReference>
<dbReference type="PDB" id="4V42">
    <property type="method" value="X-ray"/>
    <property type="resolution" value="5.50 A"/>
    <property type="chains" value="BM=1-145"/>
</dbReference>
<dbReference type="PDB" id="4V4R">
    <property type="method" value="X-ray"/>
    <property type="resolution" value="5.90 A"/>
    <property type="chains" value="N=1-145"/>
</dbReference>
<dbReference type="PDB" id="4V4S">
    <property type="method" value="X-ray"/>
    <property type="resolution" value="6.76 A"/>
    <property type="chains" value="N=1-145"/>
</dbReference>
<dbReference type="PDB" id="4V4T">
    <property type="method" value="X-ray"/>
    <property type="resolution" value="6.46 A"/>
    <property type="chains" value="BN=1-145"/>
</dbReference>
<dbReference type="PDB" id="4V9F">
    <property type="method" value="X-ray"/>
    <property type="resolution" value="2.40 A"/>
    <property type="chains" value="J=1-145"/>
</dbReference>
<dbReference type="PDBsum" id="1FFK"/>
<dbReference type="PDBsum" id="1JJ2"/>
<dbReference type="PDBsum" id="1K73"/>
<dbReference type="PDBsum" id="1K8A"/>
<dbReference type="PDBsum" id="1K9M"/>
<dbReference type="PDBsum" id="1KC8"/>
<dbReference type="PDBsum" id="1KD1"/>
<dbReference type="PDBsum" id="1KQS"/>
<dbReference type="PDBsum" id="1M1K"/>
<dbReference type="PDBsum" id="1M90"/>
<dbReference type="PDBsum" id="1ML5"/>
<dbReference type="PDBsum" id="1N8R"/>
<dbReference type="PDBsum" id="1NJI"/>
<dbReference type="PDBsum" id="1Q7Y"/>
<dbReference type="PDBsum" id="1Q81"/>
<dbReference type="PDBsum" id="1Q82"/>
<dbReference type="PDBsum" id="1Q86"/>
<dbReference type="PDBsum" id="1QVF"/>
<dbReference type="PDBsum" id="1QVG"/>
<dbReference type="PDBsum" id="1S72"/>
<dbReference type="PDBsum" id="1VQ4"/>
<dbReference type="PDBsum" id="1VQ5"/>
<dbReference type="PDBsum" id="1VQ6"/>
<dbReference type="PDBsum" id="1VQ7"/>
<dbReference type="PDBsum" id="1VQ8"/>
<dbReference type="PDBsum" id="1VQ9"/>
<dbReference type="PDBsum" id="1VQK"/>
<dbReference type="PDBsum" id="1VQL"/>
<dbReference type="PDBsum" id="1VQM"/>
<dbReference type="PDBsum" id="1VQN"/>
<dbReference type="PDBsum" id="1VQO"/>
<dbReference type="PDBsum" id="1VQP"/>
<dbReference type="PDBsum" id="1W2B"/>
<dbReference type="PDBsum" id="1YHQ"/>
<dbReference type="PDBsum" id="1YI2"/>
<dbReference type="PDBsum" id="1YIJ"/>
<dbReference type="PDBsum" id="1YIT"/>
<dbReference type="PDBsum" id="1YJ9"/>
<dbReference type="PDBsum" id="1YJN"/>
<dbReference type="PDBsum" id="1YJW"/>
<dbReference type="PDBsum" id="2OTJ"/>
<dbReference type="PDBsum" id="2OTL"/>
<dbReference type="PDBsum" id="2QA4"/>
<dbReference type="PDBsum" id="2QEX"/>
<dbReference type="PDBsum" id="3CC2"/>
<dbReference type="PDBsum" id="3CC4"/>
<dbReference type="PDBsum" id="3CC7"/>
<dbReference type="PDBsum" id="3CCE"/>
<dbReference type="PDBsum" id="3CCJ"/>
<dbReference type="PDBsum" id="3CCL"/>
<dbReference type="PDBsum" id="3CCM"/>
<dbReference type="PDBsum" id="3CCQ"/>
<dbReference type="PDBsum" id="3CCR"/>
<dbReference type="PDBsum" id="3CCS"/>
<dbReference type="PDBsum" id="3CCU"/>
<dbReference type="PDBsum" id="3CCV"/>
<dbReference type="PDBsum" id="3CD6"/>
<dbReference type="PDBsum" id="3CMA"/>
<dbReference type="PDBsum" id="3CME"/>
<dbReference type="PDBsum" id="3CPW"/>
<dbReference type="PDBsum" id="3CXC"/>
<dbReference type="PDBsum" id="3G4S"/>
<dbReference type="PDBsum" id="3G6E"/>
<dbReference type="PDBsum" id="3G71"/>
<dbReference type="PDBsum" id="3I55"/>
<dbReference type="PDBsum" id="3I56"/>
<dbReference type="PDBsum" id="3OW2"/>
<dbReference type="PDBsum" id="4V42"/>
<dbReference type="PDBsum" id="4V4R"/>
<dbReference type="PDBsum" id="4V4S"/>
<dbReference type="PDBsum" id="4V4T"/>
<dbReference type="PDBsum" id="4V9F"/>
<dbReference type="SMR" id="P29198"/>
<dbReference type="IntAct" id="P29198">
    <property type="interactions" value="3"/>
</dbReference>
<dbReference type="STRING" id="272569.rrnAC0065"/>
<dbReference type="PaxDb" id="272569-rrnAC0065"/>
<dbReference type="EnsemblBacteria" id="AAV45145">
    <property type="protein sequence ID" value="AAV45145"/>
    <property type="gene ID" value="rrnAC0065"/>
</dbReference>
<dbReference type="KEGG" id="hma:rrnAC0065"/>
<dbReference type="PATRIC" id="fig|272569.17.peg.873"/>
<dbReference type="eggNOG" id="arCOG04242">
    <property type="taxonomic scope" value="Archaea"/>
</dbReference>
<dbReference type="HOGENOM" id="CLU_076922_1_0_2"/>
<dbReference type="EvolutionaryTrace" id="P29198"/>
<dbReference type="Proteomes" id="UP000001169">
    <property type="component" value="Chromosome I"/>
</dbReference>
<dbReference type="GO" id="GO:0022625">
    <property type="term" value="C:cytosolic large ribosomal subunit"/>
    <property type="evidence" value="ECO:0007669"/>
    <property type="project" value="TreeGrafter"/>
</dbReference>
<dbReference type="GO" id="GO:0003729">
    <property type="term" value="F:mRNA binding"/>
    <property type="evidence" value="ECO:0007669"/>
    <property type="project" value="TreeGrafter"/>
</dbReference>
<dbReference type="GO" id="GO:0019843">
    <property type="term" value="F:rRNA binding"/>
    <property type="evidence" value="ECO:0007669"/>
    <property type="project" value="UniProtKB-KW"/>
</dbReference>
<dbReference type="GO" id="GO:0003735">
    <property type="term" value="F:structural constituent of ribosome"/>
    <property type="evidence" value="ECO:0007669"/>
    <property type="project" value="InterPro"/>
</dbReference>
<dbReference type="GO" id="GO:0017148">
    <property type="term" value="P:negative regulation of translation"/>
    <property type="evidence" value="ECO:0007669"/>
    <property type="project" value="TreeGrafter"/>
</dbReference>
<dbReference type="GO" id="GO:0006412">
    <property type="term" value="P:translation"/>
    <property type="evidence" value="ECO:0007669"/>
    <property type="project" value="UniProtKB-UniRule"/>
</dbReference>
<dbReference type="Gene3D" id="3.90.1180.10">
    <property type="entry name" value="Ribosomal protein L13"/>
    <property type="match status" value="1"/>
</dbReference>
<dbReference type="HAMAP" id="MF_01366">
    <property type="entry name" value="Ribosomal_uL13"/>
    <property type="match status" value="1"/>
</dbReference>
<dbReference type="InterPro" id="IPR005822">
    <property type="entry name" value="Ribosomal_uL13"/>
</dbReference>
<dbReference type="InterPro" id="IPR005823">
    <property type="entry name" value="Ribosomal_uL13_bac-type"/>
</dbReference>
<dbReference type="InterPro" id="IPR023563">
    <property type="entry name" value="Ribosomal_uL13_CS"/>
</dbReference>
<dbReference type="InterPro" id="IPR005755">
    <property type="entry name" value="Ribosomal_uL13_euk/arc"/>
</dbReference>
<dbReference type="InterPro" id="IPR036899">
    <property type="entry name" value="Ribosomal_uL13_sf"/>
</dbReference>
<dbReference type="NCBIfam" id="TIGR01077">
    <property type="entry name" value="L13_A_E"/>
    <property type="match status" value="1"/>
</dbReference>
<dbReference type="NCBIfam" id="NF005004">
    <property type="entry name" value="PRK06394.1"/>
    <property type="match status" value="1"/>
</dbReference>
<dbReference type="PANTHER" id="PTHR11545:SF3">
    <property type="entry name" value="LARGE RIBOSOMAL SUBUNIT PROTEIN UL13"/>
    <property type="match status" value="1"/>
</dbReference>
<dbReference type="PANTHER" id="PTHR11545">
    <property type="entry name" value="RIBOSOMAL PROTEIN L13"/>
    <property type="match status" value="1"/>
</dbReference>
<dbReference type="Pfam" id="PF00572">
    <property type="entry name" value="Ribosomal_L13"/>
    <property type="match status" value="1"/>
</dbReference>
<dbReference type="PIRSF" id="PIRSF002181">
    <property type="entry name" value="Ribosomal_L13"/>
    <property type="match status" value="1"/>
</dbReference>
<dbReference type="SUPFAM" id="SSF52161">
    <property type="entry name" value="Ribosomal protein L13"/>
    <property type="match status" value="1"/>
</dbReference>
<dbReference type="PROSITE" id="PS00783">
    <property type="entry name" value="RIBOSOMAL_L13"/>
    <property type="match status" value="1"/>
</dbReference>
<gene>
    <name evidence="2" type="primary">rpl13</name>
    <name type="ordered locus">rrnAC0065</name>
</gene>
<organism>
    <name type="scientific">Haloarcula marismortui (strain ATCC 43049 / DSM 3752 / JCM 8966 / VKM B-1809)</name>
    <name type="common">Halobacterium marismortui</name>
    <dbReference type="NCBI Taxonomy" id="272569"/>
    <lineage>
        <taxon>Archaea</taxon>
        <taxon>Methanobacteriati</taxon>
        <taxon>Methanobacteriota</taxon>
        <taxon>Stenosarchaea group</taxon>
        <taxon>Halobacteria</taxon>
        <taxon>Halobacteriales</taxon>
        <taxon>Haloarculaceae</taxon>
        <taxon>Haloarcula</taxon>
    </lineage>
</organism>
<keyword id="KW-0002">3D-structure</keyword>
<keyword id="KW-1185">Reference proteome</keyword>
<keyword id="KW-0687">Ribonucleoprotein</keyword>
<keyword id="KW-0689">Ribosomal protein</keyword>
<keyword id="KW-0694">RNA-binding</keyword>
<keyword id="KW-0699">rRNA-binding</keyword>
<evidence type="ECO:0000250" key="1"/>
<evidence type="ECO:0000255" key="2">
    <source>
        <dbReference type="HAMAP-Rule" id="MF_01366"/>
    </source>
</evidence>
<evidence type="ECO:0000269" key="3">
    <source>
    </source>
</evidence>
<evidence type="ECO:0000269" key="4">
    <source>
    </source>
</evidence>
<evidence type="ECO:0000305" key="5"/>
<evidence type="ECO:0007829" key="6">
    <source>
        <dbReference type="PDB" id="1VQ8"/>
    </source>
</evidence>
<evidence type="ECO:0007829" key="7">
    <source>
        <dbReference type="PDB" id="1VQO"/>
    </source>
</evidence>
<evidence type="ECO:0007829" key="8">
    <source>
        <dbReference type="PDB" id="3CC4"/>
    </source>
</evidence>
<accession>P29198</accession>
<accession>Q5V5Q7</accession>
<proteinExistence type="evidence at protein level"/>
<feature type="chain" id="PRO_0000133758" description="Large ribosomal subunit protein uL13">
    <location>
        <begin position="1"/>
        <end position="145"/>
    </location>
</feature>
<feature type="strand" evidence="6">
    <location>
        <begin position="9"/>
        <end position="13"/>
    </location>
</feature>
<feature type="helix" evidence="6">
    <location>
        <begin position="19"/>
        <end position="31"/>
    </location>
</feature>
<feature type="strand" evidence="6">
    <location>
        <begin position="36"/>
        <end position="39"/>
    </location>
</feature>
<feature type="helix" evidence="6">
    <location>
        <begin position="41"/>
        <end position="43"/>
    </location>
</feature>
<feature type="strand" evidence="6">
    <location>
        <begin position="45"/>
        <end position="48"/>
    </location>
</feature>
<feature type="helix" evidence="6">
    <location>
        <begin position="50"/>
        <end position="62"/>
    </location>
</feature>
<feature type="helix" evidence="6">
    <location>
        <begin position="75"/>
        <end position="84"/>
    </location>
</feature>
<feature type="turn" evidence="6">
    <location>
        <begin position="85"/>
        <end position="90"/>
    </location>
</feature>
<feature type="helix" evidence="6">
    <location>
        <begin position="92"/>
        <end position="99"/>
    </location>
</feature>
<feature type="strand" evidence="6">
    <location>
        <begin position="101"/>
        <end position="103"/>
    </location>
</feature>
<feature type="strand" evidence="6">
    <location>
        <begin position="109"/>
        <end position="111"/>
    </location>
</feature>
<feature type="turn" evidence="8">
    <location>
        <begin position="117"/>
        <end position="119"/>
    </location>
</feature>
<feature type="turn" evidence="7">
    <location>
        <begin position="123"/>
        <end position="125"/>
    </location>
</feature>
<feature type="strand" evidence="6">
    <location>
        <begin position="128"/>
        <end position="131"/>
    </location>
</feature>
<feature type="helix" evidence="6">
    <location>
        <begin position="132"/>
        <end position="139"/>
    </location>
</feature>
<protein>
    <recommendedName>
        <fullName evidence="2">Large ribosomal subunit protein uL13</fullName>
    </recommendedName>
    <alternativeName>
        <fullName evidence="5">50S ribosomal protein L13</fullName>
    </alternativeName>
    <alternativeName>
        <fullName>Hmal13</fullName>
    </alternativeName>
</protein>
<sequence length="145" mass="16228">MSVAEFDADVIVDARDCIMGRVASQVAEQALDGETVAVVNAERAVITGREEQIVEKYEKRVDIGNDNGYFYPKRPDGIFKRTIRGMLPHKKQRGREAFESVRVYLGNPYDEDGEVLDGTSLDRLSNIKFVTLGEISETLGANKTW</sequence>
<comment type="function">
    <text evidence="1">This protein is one of the early assembly proteins of the 50S ribosomal subunit (By similarity). Binds to 23S rRNA.</text>
</comment>
<comment type="subunit">
    <text evidence="2 3 4">Part of the 50S ribosomal subunit. Interacts weakly with proteins L3 and L6.</text>
</comment>
<comment type="similarity">
    <text evidence="2">Belongs to the universal ribosomal protein uL13 family.</text>
</comment>